<keyword id="KW-0002">3D-structure</keyword>
<keyword id="KW-1185">Reference proteome</keyword>
<keyword id="KW-0687">Ribonucleoprotein</keyword>
<keyword id="KW-0689">Ribosomal protein</keyword>
<gene>
    <name evidence="1" type="primary">rpsJ</name>
    <name type="ordered locus">MPN_164</name>
    <name type="ORF">MP667</name>
</gene>
<feature type="chain" id="PRO_0000146558" description="Small ribosomal subunit protein uS10">
    <location>
        <begin position="1"/>
        <end position="108"/>
    </location>
</feature>
<feature type="strand" evidence="3">
    <location>
        <begin position="10"/>
        <end position="19"/>
    </location>
</feature>
<feature type="helix" evidence="3">
    <location>
        <begin position="22"/>
        <end position="37"/>
    </location>
</feature>
<feature type="strand" evidence="3">
    <location>
        <begin position="46"/>
        <end position="58"/>
    </location>
</feature>
<feature type="strand" evidence="3">
    <location>
        <begin position="60"/>
        <end position="63"/>
    </location>
</feature>
<feature type="strand" evidence="3">
    <location>
        <begin position="67"/>
        <end position="84"/>
    </location>
</feature>
<feature type="helix" evidence="3">
    <location>
        <begin position="86"/>
        <end position="93"/>
    </location>
</feature>
<feature type="strand" evidence="3">
    <location>
        <begin position="102"/>
        <end position="104"/>
    </location>
</feature>
<accession>P75581</accession>
<dbReference type="EMBL" id="U00089">
    <property type="protein sequence ID" value="AAB96315.1"/>
    <property type="molecule type" value="Genomic_DNA"/>
</dbReference>
<dbReference type="PIR" id="S73993">
    <property type="entry name" value="S73993"/>
</dbReference>
<dbReference type="RefSeq" id="NP_109852.1">
    <property type="nucleotide sequence ID" value="NC_000912.1"/>
</dbReference>
<dbReference type="RefSeq" id="WP_010874521.1">
    <property type="nucleotide sequence ID" value="NZ_OU342337.1"/>
</dbReference>
<dbReference type="PDB" id="7OOC">
    <property type="method" value="EM"/>
    <property type="resolution" value="3.70 A"/>
    <property type="chains" value="I=1-108"/>
</dbReference>
<dbReference type="PDB" id="7P6Z">
    <property type="method" value="EM"/>
    <property type="resolution" value="3.50 A"/>
    <property type="chains" value="I=1-108"/>
</dbReference>
<dbReference type="PDB" id="7PAH">
    <property type="method" value="EM"/>
    <property type="resolution" value="9.50 A"/>
    <property type="chains" value="I=1-108"/>
</dbReference>
<dbReference type="PDB" id="7PAI">
    <property type="method" value="EM"/>
    <property type="resolution" value="6.70 A"/>
    <property type="chains" value="I=1-108"/>
</dbReference>
<dbReference type="PDB" id="7PAJ">
    <property type="method" value="EM"/>
    <property type="resolution" value="7.30 A"/>
    <property type="chains" value="I=1-108"/>
</dbReference>
<dbReference type="PDB" id="7PAK">
    <property type="method" value="EM"/>
    <property type="resolution" value="5.30 A"/>
    <property type="chains" value="I=1-108"/>
</dbReference>
<dbReference type="PDB" id="7PAL">
    <property type="method" value="EM"/>
    <property type="resolution" value="4.70 A"/>
    <property type="chains" value="I=1-108"/>
</dbReference>
<dbReference type="PDB" id="7PAM">
    <property type="method" value="EM"/>
    <property type="resolution" value="6.80 A"/>
    <property type="chains" value="I=1-108"/>
</dbReference>
<dbReference type="PDB" id="7PAN">
    <property type="method" value="EM"/>
    <property type="resolution" value="9.70 A"/>
    <property type="chains" value="I=1-108"/>
</dbReference>
<dbReference type="PDB" id="7PAO">
    <property type="method" value="EM"/>
    <property type="resolution" value="7.00 A"/>
    <property type="chains" value="I=1-108"/>
</dbReference>
<dbReference type="PDB" id="7PAQ">
    <property type="method" value="EM"/>
    <property type="resolution" value="8.90 A"/>
    <property type="chains" value="I=1-108"/>
</dbReference>
<dbReference type="PDB" id="7PAR">
    <property type="method" value="EM"/>
    <property type="resolution" value="8.20 A"/>
    <property type="chains" value="I=1-108"/>
</dbReference>
<dbReference type="PDB" id="7PAS">
    <property type="method" value="EM"/>
    <property type="resolution" value="16.00 A"/>
    <property type="chains" value="I=1-108"/>
</dbReference>
<dbReference type="PDB" id="7PH9">
    <property type="method" value="EM"/>
    <property type="resolution" value="8.70 A"/>
    <property type="chains" value="I=1-108"/>
</dbReference>
<dbReference type="PDB" id="7PHA">
    <property type="method" value="EM"/>
    <property type="resolution" value="8.50 A"/>
    <property type="chains" value="I=1-108"/>
</dbReference>
<dbReference type="PDB" id="7PHB">
    <property type="method" value="EM"/>
    <property type="resolution" value="4.90 A"/>
    <property type="chains" value="I=1-108"/>
</dbReference>
<dbReference type="PDB" id="7PHC">
    <property type="method" value="EM"/>
    <property type="resolution" value="9.90 A"/>
    <property type="chains" value="I=1-108"/>
</dbReference>
<dbReference type="PDB" id="7PI8">
    <property type="method" value="EM"/>
    <property type="resolution" value="8.90 A"/>
    <property type="chains" value="I=1-108"/>
</dbReference>
<dbReference type="PDB" id="7PI9">
    <property type="method" value="EM"/>
    <property type="resolution" value="6.30 A"/>
    <property type="chains" value="I=1-108"/>
</dbReference>
<dbReference type="PDB" id="7PIA">
    <property type="method" value="EM"/>
    <property type="resolution" value="13.60 A"/>
    <property type="chains" value="I=1-108"/>
</dbReference>
<dbReference type="PDB" id="7PIB">
    <property type="method" value="EM"/>
    <property type="resolution" value="4.70 A"/>
    <property type="chains" value="I=1-108"/>
</dbReference>
<dbReference type="PDB" id="7PIC">
    <property type="method" value="EM"/>
    <property type="resolution" value="9.10 A"/>
    <property type="chains" value="I=1-108"/>
</dbReference>
<dbReference type="PDB" id="7PIO">
    <property type="method" value="EM"/>
    <property type="resolution" value="9.50 A"/>
    <property type="chains" value="I=1-108"/>
</dbReference>
<dbReference type="PDB" id="7PIP">
    <property type="method" value="EM"/>
    <property type="resolution" value="9.30 A"/>
    <property type="chains" value="I=1-108"/>
</dbReference>
<dbReference type="PDB" id="7PIQ">
    <property type="method" value="EM"/>
    <property type="resolution" value="9.70 A"/>
    <property type="chains" value="I=1-108"/>
</dbReference>
<dbReference type="PDB" id="7PIR">
    <property type="method" value="EM"/>
    <property type="resolution" value="12.10 A"/>
    <property type="chains" value="I=1-108"/>
</dbReference>
<dbReference type="PDB" id="7PIS">
    <property type="method" value="EM"/>
    <property type="resolution" value="15.00 A"/>
    <property type="chains" value="I=1-108"/>
</dbReference>
<dbReference type="PDB" id="7PIT">
    <property type="method" value="EM"/>
    <property type="resolution" value="5.70 A"/>
    <property type="chains" value="I=1-108"/>
</dbReference>
<dbReference type="PDB" id="8P6P">
    <property type="method" value="EM"/>
    <property type="resolution" value="3.20 A"/>
    <property type="chains" value="I=1-108"/>
</dbReference>
<dbReference type="PDB" id="8P7X">
    <property type="method" value="EM"/>
    <property type="resolution" value="3.03 A"/>
    <property type="chains" value="I=1-108"/>
</dbReference>
<dbReference type="PDB" id="8P7Y">
    <property type="method" value="EM"/>
    <property type="resolution" value="3.70 A"/>
    <property type="chains" value="I=1-108"/>
</dbReference>
<dbReference type="PDB" id="8P8V">
    <property type="method" value="EM"/>
    <property type="resolution" value="8.70 A"/>
    <property type="chains" value="I=1-108"/>
</dbReference>
<dbReference type="PDB" id="8P8W">
    <property type="method" value="EM"/>
    <property type="resolution" value="8.70 A"/>
    <property type="chains" value="I=1-108"/>
</dbReference>
<dbReference type="PDBsum" id="7OOC"/>
<dbReference type="PDBsum" id="7P6Z"/>
<dbReference type="PDBsum" id="7PAH"/>
<dbReference type="PDBsum" id="7PAI"/>
<dbReference type="PDBsum" id="7PAJ"/>
<dbReference type="PDBsum" id="7PAK"/>
<dbReference type="PDBsum" id="7PAL"/>
<dbReference type="PDBsum" id="7PAM"/>
<dbReference type="PDBsum" id="7PAN"/>
<dbReference type="PDBsum" id="7PAO"/>
<dbReference type="PDBsum" id="7PAQ"/>
<dbReference type="PDBsum" id="7PAR"/>
<dbReference type="PDBsum" id="7PAS"/>
<dbReference type="PDBsum" id="7PH9"/>
<dbReference type="PDBsum" id="7PHA"/>
<dbReference type="PDBsum" id="7PHB"/>
<dbReference type="PDBsum" id="7PHC"/>
<dbReference type="PDBsum" id="7PI8"/>
<dbReference type="PDBsum" id="7PI9"/>
<dbReference type="PDBsum" id="7PIA"/>
<dbReference type="PDBsum" id="7PIB"/>
<dbReference type="PDBsum" id="7PIC"/>
<dbReference type="PDBsum" id="7PIO"/>
<dbReference type="PDBsum" id="7PIP"/>
<dbReference type="PDBsum" id="7PIQ"/>
<dbReference type="PDBsum" id="7PIR"/>
<dbReference type="PDBsum" id="7PIS"/>
<dbReference type="PDBsum" id="7PIT"/>
<dbReference type="PDBsum" id="8P6P"/>
<dbReference type="PDBsum" id="8P7X"/>
<dbReference type="PDBsum" id="8P7Y"/>
<dbReference type="PDBsum" id="8P8V"/>
<dbReference type="PDBsum" id="8P8W"/>
<dbReference type="EMDB" id="EMD-13234"/>
<dbReference type="EMDB" id="EMD-13272"/>
<dbReference type="EMDB" id="EMD-13273"/>
<dbReference type="EMDB" id="EMD-13274"/>
<dbReference type="EMDB" id="EMD-13275"/>
<dbReference type="EMDB" id="EMD-13276"/>
<dbReference type="EMDB" id="EMD-13277"/>
<dbReference type="EMDB" id="EMD-13278"/>
<dbReference type="EMDB" id="EMD-13279"/>
<dbReference type="EMDB" id="EMD-13280"/>
<dbReference type="EMDB" id="EMD-13281"/>
<dbReference type="EMDB" id="EMD-13282"/>
<dbReference type="EMDB" id="EMD-13410"/>
<dbReference type="EMDB" id="EMD-13411"/>
<dbReference type="EMDB" id="EMD-13412"/>
<dbReference type="EMDB" id="EMD-13413"/>
<dbReference type="EMDB" id="EMD-13432"/>
<dbReference type="EMDB" id="EMD-13433"/>
<dbReference type="EMDB" id="EMD-13434"/>
<dbReference type="EMDB" id="EMD-13435"/>
<dbReference type="EMDB" id="EMD-13436"/>
<dbReference type="EMDB" id="EMD-13445"/>
<dbReference type="EMDB" id="EMD-13446"/>
<dbReference type="EMDB" id="EMD-13447"/>
<dbReference type="EMDB" id="EMD-13448"/>
<dbReference type="EMDB" id="EMD-13449"/>
<dbReference type="EMDB" id="EMD-13450"/>
<dbReference type="SMR" id="P75581"/>
<dbReference type="STRING" id="272634.MPN_164"/>
<dbReference type="EnsemblBacteria" id="AAB96315">
    <property type="protein sequence ID" value="AAB96315"/>
    <property type="gene ID" value="MPN_164"/>
</dbReference>
<dbReference type="GeneID" id="66609188"/>
<dbReference type="KEGG" id="mpn:MPN_164"/>
<dbReference type="PATRIC" id="fig|272634.6.peg.182"/>
<dbReference type="HOGENOM" id="CLU_122625_1_3_14"/>
<dbReference type="OrthoDB" id="9804464at2"/>
<dbReference type="BioCyc" id="MPNE272634:G1GJ3-273-MONOMER"/>
<dbReference type="Proteomes" id="UP000000808">
    <property type="component" value="Chromosome"/>
</dbReference>
<dbReference type="GO" id="GO:1990904">
    <property type="term" value="C:ribonucleoprotein complex"/>
    <property type="evidence" value="ECO:0007669"/>
    <property type="project" value="UniProtKB-KW"/>
</dbReference>
<dbReference type="GO" id="GO:0005840">
    <property type="term" value="C:ribosome"/>
    <property type="evidence" value="ECO:0007669"/>
    <property type="project" value="UniProtKB-KW"/>
</dbReference>
<dbReference type="GO" id="GO:0003735">
    <property type="term" value="F:structural constituent of ribosome"/>
    <property type="evidence" value="ECO:0007669"/>
    <property type="project" value="InterPro"/>
</dbReference>
<dbReference type="GO" id="GO:0000049">
    <property type="term" value="F:tRNA binding"/>
    <property type="evidence" value="ECO:0007669"/>
    <property type="project" value="UniProtKB-UniRule"/>
</dbReference>
<dbReference type="GO" id="GO:0006412">
    <property type="term" value="P:translation"/>
    <property type="evidence" value="ECO:0007669"/>
    <property type="project" value="UniProtKB-UniRule"/>
</dbReference>
<dbReference type="FunFam" id="3.30.70.600:FF:000003">
    <property type="entry name" value="30S ribosomal protein S10"/>
    <property type="match status" value="1"/>
</dbReference>
<dbReference type="Gene3D" id="3.30.70.600">
    <property type="entry name" value="Ribosomal protein S10 domain"/>
    <property type="match status" value="1"/>
</dbReference>
<dbReference type="HAMAP" id="MF_00508">
    <property type="entry name" value="Ribosomal_uS10"/>
    <property type="match status" value="1"/>
</dbReference>
<dbReference type="InterPro" id="IPR001848">
    <property type="entry name" value="Ribosomal_uS10"/>
</dbReference>
<dbReference type="InterPro" id="IPR018268">
    <property type="entry name" value="Ribosomal_uS10_CS"/>
</dbReference>
<dbReference type="InterPro" id="IPR027486">
    <property type="entry name" value="Ribosomal_uS10_dom"/>
</dbReference>
<dbReference type="InterPro" id="IPR036838">
    <property type="entry name" value="Ribosomal_uS10_dom_sf"/>
</dbReference>
<dbReference type="NCBIfam" id="NF001861">
    <property type="entry name" value="PRK00596.1"/>
    <property type="match status" value="1"/>
</dbReference>
<dbReference type="NCBIfam" id="TIGR01049">
    <property type="entry name" value="rpsJ_bact"/>
    <property type="match status" value="1"/>
</dbReference>
<dbReference type="PANTHER" id="PTHR11700">
    <property type="entry name" value="30S RIBOSOMAL PROTEIN S10 FAMILY MEMBER"/>
    <property type="match status" value="1"/>
</dbReference>
<dbReference type="Pfam" id="PF00338">
    <property type="entry name" value="Ribosomal_S10"/>
    <property type="match status" value="1"/>
</dbReference>
<dbReference type="PRINTS" id="PR00971">
    <property type="entry name" value="RIBOSOMALS10"/>
</dbReference>
<dbReference type="SMART" id="SM01403">
    <property type="entry name" value="Ribosomal_S10"/>
    <property type="match status" value="1"/>
</dbReference>
<dbReference type="SUPFAM" id="SSF54999">
    <property type="entry name" value="Ribosomal protein S10"/>
    <property type="match status" value="1"/>
</dbReference>
<dbReference type="PROSITE" id="PS00361">
    <property type="entry name" value="RIBOSOMAL_S10"/>
    <property type="match status" value="1"/>
</dbReference>
<name>RS10_MYCPN</name>
<comment type="function">
    <text evidence="1">Involved in the binding of tRNA to the ribosomes.</text>
</comment>
<comment type="subunit">
    <text evidence="1">Part of the 30S ribosomal subunit.</text>
</comment>
<comment type="similarity">
    <text evidence="1">Belongs to the universal ribosomal protein uS10 family.</text>
</comment>
<reference key="1">
    <citation type="journal article" date="1996" name="Nucleic Acids Res.">
        <title>Complete sequence analysis of the genome of the bacterium Mycoplasma pneumoniae.</title>
        <authorList>
            <person name="Himmelreich R."/>
            <person name="Hilbert H."/>
            <person name="Plagens H."/>
            <person name="Pirkl E."/>
            <person name="Li B.-C."/>
            <person name="Herrmann R."/>
        </authorList>
    </citation>
    <scope>NUCLEOTIDE SEQUENCE [LARGE SCALE GENOMIC DNA]</scope>
    <source>
        <strain>ATCC 29342 / M129 / Subtype 1</strain>
    </source>
</reference>
<evidence type="ECO:0000255" key="1">
    <source>
        <dbReference type="HAMAP-Rule" id="MF_00508"/>
    </source>
</evidence>
<evidence type="ECO:0000305" key="2"/>
<evidence type="ECO:0007829" key="3">
    <source>
        <dbReference type="PDB" id="8P6P"/>
    </source>
</evidence>
<proteinExistence type="evidence at protein level"/>
<organism>
    <name type="scientific">Mycoplasma pneumoniae (strain ATCC 29342 / M129 / Subtype 1)</name>
    <name type="common">Mycoplasmoides pneumoniae</name>
    <dbReference type="NCBI Taxonomy" id="272634"/>
    <lineage>
        <taxon>Bacteria</taxon>
        <taxon>Bacillati</taxon>
        <taxon>Mycoplasmatota</taxon>
        <taxon>Mycoplasmoidales</taxon>
        <taxon>Mycoplasmoidaceae</taxon>
        <taxon>Mycoplasmoides</taxon>
    </lineage>
</organism>
<sequence length="108" mass="12203">MNAANAVKYPELKIKLESYDSTLLDLTTKKIVEVVKGVDVKIKGPLPLPTKKEVITIIRSPHVDKASREQFEKNRHKRLMILVDVNQGAIDSLKRIKIPVGVTLRFSK</sequence>
<protein>
    <recommendedName>
        <fullName evidence="1">Small ribosomal subunit protein uS10</fullName>
    </recommendedName>
    <alternativeName>
        <fullName evidence="2">30S ribosomal protein S10</fullName>
    </alternativeName>
</protein>